<evidence type="ECO:0000250" key="1"/>
<evidence type="ECO:0000255" key="2"/>
<evidence type="ECO:0000256" key="3">
    <source>
        <dbReference type="SAM" id="MobiDB-lite"/>
    </source>
</evidence>
<evidence type="ECO:0000305" key="4"/>
<gene>
    <name type="primary">G</name>
</gene>
<proteinExistence type="inferred from homology"/>
<dbReference type="EMBL" id="DQ009484">
    <property type="protein sequence ID" value="AAY81661.1"/>
    <property type="molecule type" value="Viral_cRNA"/>
</dbReference>
<dbReference type="RefSeq" id="YP_443844.1">
    <property type="nucleotide sequence ID" value="NC_007652.1"/>
</dbReference>
<dbReference type="GlyCosmos" id="Q2Y2L9">
    <property type="glycosylation" value="8 sites, No reported glycans"/>
</dbReference>
<dbReference type="Proteomes" id="UP000002471">
    <property type="component" value="Segment"/>
</dbReference>
<dbReference type="GO" id="GO:0044228">
    <property type="term" value="C:host cell surface"/>
    <property type="evidence" value="ECO:0007669"/>
    <property type="project" value="UniProtKB-SubCell"/>
</dbReference>
<dbReference type="GO" id="GO:0016020">
    <property type="term" value="C:membrane"/>
    <property type="evidence" value="ECO:0007669"/>
    <property type="project" value="UniProtKB-KW"/>
</dbReference>
<dbReference type="GO" id="GO:0055036">
    <property type="term" value="C:virion membrane"/>
    <property type="evidence" value="ECO:0007669"/>
    <property type="project" value="UniProtKB-SubCell"/>
</dbReference>
<dbReference type="GO" id="GO:0046718">
    <property type="term" value="P:symbiont entry into host cell"/>
    <property type="evidence" value="ECO:0007669"/>
    <property type="project" value="UniProtKB-KW"/>
</dbReference>
<dbReference type="GO" id="GO:0019062">
    <property type="term" value="P:virion attachment to host cell"/>
    <property type="evidence" value="ECO:0007669"/>
    <property type="project" value="UniProtKB-KW"/>
</dbReference>
<reference key="1">
    <citation type="journal article" date="2004" name="Avian Dis.">
        <title>Evidence of avian pneumovirus spread beyond Minnesota among wild and domestic birds in central North America.</title>
        <authorList>
            <person name="Bennett R.S."/>
            <person name="Nezworski J."/>
            <person name="Velayudhan B.T."/>
            <person name="Nagaraja K.V."/>
            <person name="Zeman D.H."/>
            <person name="Dyer N."/>
            <person name="Graham T."/>
            <person name="Lauer D.C."/>
            <person name="Njenga M.K."/>
            <person name="Halvorson D.A."/>
        </authorList>
    </citation>
    <scope>NUCLEOTIDE SEQUENCE [GENOMIC RNA]</scope>
</reference>
<reference key="2">
    <citation type="journal article" date="2005" name="J. Virol.">
        <title>A wild goose metapneumovirus containing a large attachment glycoprotein is avirulent but immunoprotective in domestic turkeys.</title>
        <authorList>
            <person name="Bennett R.S."/>
            <person name="LaRue R."/>
            <person name="Shaw D."/>
            <person name="Yu Q."/>
            <person name="Nagaraja K.V."/>
            <person name="Halvorson D.A."/>
            <person name="Njenga M.K."/>
        </authorList>
    </citation>
    <scope>NUCLEOTIDE SEQUENCE [GENOMIC RNA]</scope>
</reference>
<accession>Q2Y2L9</accession>
<organismHost>
    <name type="scientific">Anser sp.</name>
    <name type="common">goose</name>
    <dbReference type="NCBI Taxonomy" id="8847"/>
</organismHost>
<organismHost>
    <name type="scientific">Meleagris gallopavo</name>
    <name type="common">Wild turkey</name>
    <dbReference type="NCBI Taxonomy" id="9103"/>
</organismHost>
<organism>
    <name type="scientific">Avian metapneumovirus (isolate Canada goose/Minnesota/15a/2001)</name>
    <name type="common">AMPV</name>
    <dbReference type="NCBI Taxonomy" id="652954"/>
    <lineage>
        <taxon>Viruses</taxon>
        <taxon>Riboviria</taxon>
        <taxon>Orthornavirae</taxon>
        <taxon>Negarnaviricota</taxon>
        <taxon>Haploviricotina</taxon>
        <taxon>Monjiviricetes</taxon>
        <taxon>Mononegavirales</taxon>
        <taxon>Pneumoviridae</taxon>
        <taxon>Metapneumovirus</taxon>
        <taxon>Metapneumovirus avis</taxon>
    </lineage>
</organism>
<protein>
    <recommendedName>
        <fullName>Major surface glycoprotein G</fullName>
    </recommendedName>
    <alternativeName>
        <fullName>Attachment glycoprotein G</fullName>
    </alternativeName>
    <alternativeName>
        <fullName>Membrane-bound glycoprotein</fullName>
        <shortName>mG</shortName>
    </alternativeName>
</protein>
<keyword id="KW-0325">Glycoprotein</keyword>
<keyword id="KW-0945">Host-virus interaction</keyword>
<keyword id="KW-0472">Membrane</keyword>
<keyword id="KW-1185">Reference proteome</keyword>
<keyword id="KW-0812">Transmembrane</keyword>
<keyword id="KW-1133">Transmembrane helix</keyword>
<keyword id="KW-1161">Viral attachment to host cell</keyword>
<keyword id="KW-0946">Virion</keyword>
<keyword id="KW-1160">Virus entry into host cell</keyword>
<comment type="function">
    <text evidence="1">Attaches the virion to the host cell membrane initiating the infection. Unlike the other paramyxovirus attachment proteins, lacks both neuraminidase and hemagglutinating activities (By similarity).</text>
</comment>
<comment type="subunit">
    <text evidence="1">Homooligomer. Interacts (via N-terminus) with protein M. Interacts with protein F; this interaction occurs on the surface of infected cells. Interacts with protein SH (By similarity).</text>
</comment>
<comment type="subcellular location">
    <subcellularLocation>
        <location>Virion membrane</location>
    </subcellularLocation>
    <subcellularLocation>
        <location evidence="1">Host cell surface</location>
    </subcellularLocation>
</comment>
<comment type="similarity">
    <text evidence="4">Belongs to the metapneumoviruses glycoprotein G family.</text>
</comment>
<feature type="chain" id="PRO_0000390372" description="Major surface glycoprotein G">
    <location>
        <begin position="1"/>
        <end position="585"/>
    </location>
</feature>
<feature type="topological domain" description="Intravirion" evidence="2">
    <location>
        <begin position="1"/>
        <end position="31"/>
    </location>
</feature>
<feature type="transmembrane region" description="Helical" evidence="2">
    <location>
        <begin position="32"/>
        <end position="54"/>
    </location>
</feature>
<feature type="topological domain" description="Virion surface" evidence="2">
    <location>
        <begin position="55"/>
        <end position="299"/>
    </location>
</feature>
<feature type="region of interest" description="Disordered" evidence="3">
    <location>
        <begin position="67"/>
        <end position="491"/>
    </location>
</feature>
<feature type="compositionally biased region" description="Basic and acidic residues" evidence="3">
    <location>
        <begin position="72"/>
        <end position="86"/>
    </location>
</feature>
<feature type="compositionally biased region" description="Basic and acidic residues" evidence="3">
    <location>
        <begin position="94"/>
        <end position="103"/>
    </location>
</feature>
<feature type="compositionally biased region" description="Polar residues" evidence="3">
    <location>
        <begin position="110"/>
        <end position="132"/>
    </location>
</feature>
<feature type="compositionally biased region" description="Low complexity" evidence="3">
    <location>
        <begin position="157"/>
        <end position="179"/>
    </location>
</feature>
<feature type="compositionally biased region" description="Low complexity" evidence="3">
    <location>
        <begin position="197"/>
        <end position="225"/>
    </location>
</feature>
<feature type="compositionally biased region" description="Basic and acidic residues" evidence="3">
    <location>
        <begin position="226"/>
        <end position="241"/>
    </location>
</feature>
<feature type="compositionally biased region" description="Low complexity" evidence="3">
    <location>
        <begin position="248"/>
        <end position="264"/>
    </location>
</feature>
<feature type="compositionally biased region" description="Basic and acidic residues" evidence="3">
    <location>
        <begin position="265"/>
        <end position="274"/>
    </location>
</feature>
<feature type="compositionally biased region" description="Low complexity" evidence="3">
    <location>
        <begin position="278"/>
        <end position="298"/>
    </location>
</feature>
<feature type="compositionally biased region" description="Polar residues" evidence="3">
    <location>
        <begin position="299"/>
        <end position="326"/>
    </location>
</feature>
<feature type="compositionally biased region" description="Low complexity" evidence="3">
    <location>
        <begin position="340"/>
        <end position="362"/>
    </location>
</feature>
<feature type="compositionally biased region" description="Basic and acidic residues" evidence="3">
    <location>
        <begin position="364"/>
        <end position="376"/>
    </location>
</feature>
<feature type="compositionally biased region" description="Low complexity" evidence="3">
    <location>
        <begin position="400"/>
        <end position="423"/>
    </location>
</feature>
<feature type="compositionally biased region" description="Polar residues" evidence="3">
    <location>
        <begin position="443"/>
        <end position="464"/>
    </location>
</feature>
<feature type="compositionally biased region" description="Low complexity" evidence="3">
    <location>
        <begin position="465"/>
        <end position="484"/>
    </location>
</feature>
<feature type="glycosylation site" description="N-linked (GlcNAc...) asparagine; by host" evidence="2">
    <location>
        <position position="74"/>
    </location>
</feature>
<feature type="glycosylation site" description="N-linked (GlcNAc...) asparagine; by host" evidence="2">
    <location>
        <position position="118"/>
    </location>
</feature>
<feature type="glycosylation site" description="N-linked (GlcNAc...) asparagine; by host" evidence="2">
    <location>
        <position position="360"/>
    </location>
</feature>
<feature type="glycosylation site" description="N-linked (GlcNAc...) asparagine; by host" evidence="2">
    <location>
        <position position="445"/>
    </location>
</feature>
<feature type="glycosylation site" description="N-linked (GlcNAc...) asparagine; by host" evidence="2">
    <location>
        <position position="466"/>
    </location>
</feature>
<feature type="glycosylation site" description="N-linked (GlcNAc...) asparagine; by host" evidence="2">
    <location>
        <position position="478"/>
    </location>
</feature>
<feature type="glycosylation site" description="N-linked (GlcNAc...) asparagine; by host" evidence="2">
    <location>
        <position position="524"/>
    </location>
</feature>
<feature type="glycosylation site" description="N-linked (GlcNAc...) asparagine; by host" evidence="2">
    <location>
        <position position="570"/>
    </location>
</feature>
<name>VGLG_AMPV1</name>
<sequence>MEVKVENVGKSQELKVKVKNFIKRSDCKKKLFALILGLVSFELTMNIMLSVMYVESNEALSLCRIQGTPAPRDNKTNTENTKKETTFHTTTTTRDPEVRETKTTKPKTNEGATSPSRNLTTKGDIHQTTRATTEAELEKQSKQTIEPDTSTKKHTPTRPSSESPTTTQATAQLTTPTAPKASIAPKNRQATTKKTETGTTTTSRAKKTNNPTETATTTLKATTETGKGKEGPTQHTIKEQPETTAGETTTPQSRRTTSRPAPTTKTEEEAETTKTRTTKSTQTSTGPPGPTRSTPSKTATENNKRTTTIKRPNTANTDSRQQTRTTAEQDRQIQTKAKPTTNGAHAQTTTTPEHNTDTTNSTKESSKEDKTTRDPSSKTPTDQEDASKGTTAANPRKNTEANTRTPPTTTPTRHTTESATSTTGDKTKAKTTRWKSTADRQPIRNSTTAETKTAQSKQPTPKQLSNNTTPENTTPPNNKSSSQTDAAPTEEIEIRSSLWRRRYVYGPCRENVLEHPMNPCFKDNTTWIYSDNGRNLPAGYYDSKTDKIICYGIYRGNSYCYGRIECTCKNGTGLLSYCCNSYNWS</sequence>